<sequence length="288" mass="33418">MEKVIDITERVPAMKKRRRRRTNFKFLALVTIFLFIIIILLYFQLPYSDIKKIDIKGAALKEDTYYIDQSNLKINDSLWGFKISEVEQAIAQHEWVKSVTVERKFLNEVQITVEEWQKVAYISQDGEFYPMLDNGIVFEESNEIVPIDAPIFRDFENEALRKKLLKELANLKPEVLSLISQINANPTEADPYSITLFMNDGYEVRADANTLAEKLNYYPSIIAQIESEDVSEKGIVDIEVGSYYRPFSDEYTLIKENTEKTEEPAEETENADTEEGGQLEEQNEEEPE</sequence>
<protein>
    <recommendedName>
        <fullName evidence="1">Cell division protein DivIB</fullName>
    </recommendedName>
</protein>
<evidence type="ECO:0000255" key="1">
    <source>
        <dbReference type="HAMAP-Rule" id="MF_00912"/>
    </source>
</evidence>
<evidence type="ECO:0000255" key="2">
    <source>
        <dbReference type="PROSITE-ProRule" id="PRU01115"/>
    </source>
</evidence>
<evidence type="ECO:0000256" key="3">
    <source>
        <dbReference type="SAM" id="MobiDB-lite"/>
    </source>
</evidence>
<reference key="1">
    <citation type="submission" date="2011-04" db="EMBL/GenBank/DDBJ databases">
        <title>Genome sequence of Solibacillus silvestris StLB046.</title>
        <authorList>
            <person name="Morohoshi T."/>
            <person name="Someya N."/>
            <person name="Ikeda T."/>
        </authorList>
    </citation>
    <scope>NUCLEOTIDE SEQUENCE [LARGE SCALE GENOMIC DNA]</scope>
    <source>
        <strain>StLB046</strain>
    </source>
</reference>
<feature type="chain" id="PRO_0000414784" description="Cell division protein DivIB">
    <location>
        <begin position="1"/>
        <end position="288"/>
    </location>
</feature>
<feature type="topological domain" description="Cytoplasmic" evidence="1">
    <location>
        <begin position="1"/>
        <end position="25"/>
    </location>
</feature>
<feature type="transmembrane region" description="Helical" evidence="1">
    <location>
        <begin position="26"/>
        <end position="46"/>
    </location>
</feature>
<feature type="topological domain" description="Extracellular" evidence="1">
    <location>
        <begin position="47"/>
        <end position="288"/>
    </location>
</feature>
<feature type="domain" description="POTRA" evidence="2">
    <location>
        <begin position="48"/>
        <end position="116"/>
    </location>
</feature>
<feature type="region of interest" description="Disordered" evidence="3">
    <location>
        <begin position="253"/>
        <end position="288"/>
    </location>
</feature>
<feature type="compositionally biased region" description="Basic and acidic residues" evidence="3">
    <location>
        <begin position="253"/>
        <end position="263"/>
    </location>
</feature>
<feature type="compositionally biased region" description="Acidic residues" evidence="3">
    <location>
        <begin position="264"/>
        <end position="288"/>
    </location>
</feature>
<dbReference type="EMBL" id="AP012157">
    <property type="protein sequence ID" value="BAK17521.1"/>
    <property type="molecule type" value="Genomic_DNA"/>
</dbReference>
<dbReference type="RefSeq" id="WP_008403396.1">
    <property type="nucleotide sequence ID" value="NC_018065.1"/>
</dbReference>
<dbReference type="STRING" id="1002809.SSIL_3098"/>
<dbReference type="KEGG" id="siv:SSIL_3098"/>
<dbReference type="PATRIC" id="fig|1002809.3.peg.3126"/>
<dbReference type="eggNOG" id="COG1589">
    <property type="taxonomic scope" value="Bacteria"/>
</dbReference>
<dbReference type="HOGENOM" id="CLU_046278_2_0_9"/>
<dbReference type="Proteomes" id="UP000006691">
    <property type="component" value="Chromosome"/>
</dbReference>
<dbReference type="GO" id="GO:0032153">
    <property type="term" value="C:cell division site"/>
    <property type="evidence" value="ECO:0007669"/>
    <property type="project" value="UniProtKB-UniRule"/>
</dbReference>
<dbReference type="GO" id="GO:0005886">
    <property type="term" value="C:plasma membrane"/>
    <property type="evidence" value="ECO:0007669"/>
    <property type="project" value="UniProtKB-SubCell"/>
</dbReference>
<dbReference type="GO" id="GO:0043093">
    <property type="term" value="P:FtsZ-dependent cytokinesis"/>
    <property type="evidence" value="ECO:0007669"/>
    <property type="project" value="UniProtKB-UniRule"/>
</dbReference>
<dbReference type="Gene3D" id="3.40.50.10960">
    <property type="match status" value="1"/>
</dbReference>
<dbReference type="Gene3D" id="3.10.20.310">
    <property type="entry name" value="membrane protein fhac"/>
    <property type="match status" value="1"/>
</dbReference>
<dbReference type="HAMAP" id="MF_00912">
    <property type="entry name" value="DivIB"/>
    <property type="match status" value="1"/>
</dbReference>
<dbReference type="InterPro" id="IPR005548">
    <property type="entry name" value="Cell_div_FtsQ/DivIB_C"/>
</dbReference>
<dbReference type="InterPro" id="IPR026580">
    <property type="entry name" value="DivIB"/>
</dbReference>
<dbReference type="InterPro" id="IPR050487">
    <property type="entry name" value="FtsQ_DivIB"/>
</dbReference>
<dbReference type="InterPro" id="IPR034746">
    <property type="entry name" value="POTRA"/>
</dbReference>
<dbReference type="InterPro" id="IPR013685">
    <property type="entry name" value="POTRA_FtsQ_type"/>
</dbReference>
<dbReference type="PANTHER" id="PTHR37820">
    <property type="entry name" value="CELL DIVISION PROTEIN DIVIB"/>
    <property type="match status" value="1"/>
</dbReference>
<dbReference type="PANTHER" id="PTHR37820:SF1">
    <property type="entry name" value="CELL DIVISION PROTEIN FTSQ"/>
    <property type="match status" value="1"/>
</dbReference>
<dbReference type="Pfam" id="PF03799">
    <property type="entry name" value="FtsQ_DivIB_C"/>
    <property type="match status" value="1"/>
</dbReference>
<dbReference type="Pfam" id="PF08478">
    <property type="entry name" value="POTRA_1"/>
    <property type="match status" value="1"/>
</dbReference>
<dbReference type="PROSITE" id="PS51779">
    <property type="entry name" value="POTRA"/>
    <property type="match status" value="1"/>
</dbReference>
<keyword id="KW-0131">Cell cycle</keyword>
<keyword id="KW-0132">Cell division</keyword>
<keyword id="KW-1003">Cell membrane</keyword>
<keyword id="KW-0472">Membrane</keyword>
<keyword id="KW-1185">Reference proteome</keyword>
<keyword id="KW-0812">Transmembrane</keyword>
<keyword id="KW-1133">Transmembrane helix</keyword>
<name>DIVIB_SOLSS</name>
<accession>F2F702</accession>
<organism>
    <name type="scientific">Solibacillus silvestris (strain StLB046)</name>
    <name type="common">Bacillus silvestris</name>
    <dbReference type="NCBI Taxonomy" id="1002809"/>
    <lineage>
        <taxon>Bacteria</taxon>
        <taxon>Bacillati</taxon>
        <taxon>Bacillota</taxon>
        <taxon>Bacilli</taxon>
        <taxon>Bacillales</taxon>
        <taxon>Caryophanaceae</taxon>
        <taxon>Solibacillus</taxon>
    </lineage>
</organism>
<proteinExistence type="inferred from homology"/>
<gene>
    <name evidence="1" type="primary">divIB</name>
    <name type="ordered locus">SSIL_3098</name>
</gene>
<comment type="function">
    <text evidence="1">Cell division protein that may be involved in stabilizing or promoting the assembly of the division complex.</text>
</comment>
<comment type="subcellular location">
    <subcellularLocation>
        <location evidence="1">Cell membrane</location>
        <topology evidence="1">Single-pass type II membrane protein</topology>
    </subcellularLocation>
    <text evidence="1">Localizes to the division septum.</text>
</comment>
<comment type="similarity">
    <text evidence="1">Belongs to the FtsQ/DivIB family. DivIB subfamily.</text>
</comment>